<feature type="chain" id="PRO_0000154504" description="Anthranilate phosphoribosyltransferase">
    <location>
        <begin position="1"/>
        <end position="344"/>
    </location>
</feature>
<feature type="binding site" evidence="1">
    <location>
        <position position="84"/>
    </location>
    <ligand>
        <name>5-phospho-alpha-D-ribose 1-diphosphate</name>
        <dbReference type="ChEBI" id="CHEBI:58017"/>
    </ligand>
</feature>
<feature type="binding site" evidence="1">
    <location>
        <position position="84"/>
    </location>
    <ligand>
        <name>anthranilate</name>
        <dbReference type="ChEBI" id="CHEBI:16567"/>
        <label>1</label>
    </ligand>
</feature>
<feature type="binding site" evidence="1">
    <location>
        <begin position="87"/>
        <end position="88"/>
    </location>
    <ligand>
        <name>5-phospho-alpha-D-ribose 1-diphosphate</name>
        <dbReference type="ChEBI" id="CHEBI:58017"/>
    </ligand>
</feature>
<feature type="binding site" evidence="1">
    <location>
        <position position="92"/>
    </location>
    <ligand>
        <name>5-phospho-alpha-D-ribose 1-diphosphate</name>
        <dbReference type="ChEBI" id="CHEBI:58017"/>
    </ligand>
</feature>
<feature type="binding site" evidence="1">
    <location>
        <begin position="94"/>
        <end position="97"/>
    </location>
    <ligand>
        <name>5-phospho-alpha-D-ribose 1-diphosphate</name>
        <dbReference type="ChEBI" id="CHEBI:58017"/>
    </ligand>
</feature>
<feature type="binding site" evidence="1">
    <location>
        <position position="96"/>
    </location>
    <ligand>
        <name>Mg(2+)</name>
        <dbReference type="ChEBI" id="CHEBI:18420"/>
        <label>1</label>
    </ligand>
</feature>
<feature type="binding site" evidence="1">
    <location>
        <begin position="112"/>
        <end position="120"/>
    </location>
    <ligand>
        <name>5-phospho-alpha-D-ribose 1-diphosphate</name>
        <dbReference type="ChEBI" id="CHEBI:58017"/>
    </ligand>
</feature>
<feature type="binding site" evidence="1">
    <location>
        <position position="115"/>
    </location>
    <ligand>
        <name>anthranilate</name>
        <dbReference type="ChEBI" id="CHEBI:16567"/>
        <label>1</label>
    </ligand>
</feature>
<feature type="binding site" evidence="1">
    <location>
        <position position="124"/>
    </location>
    <ligand>
        <name>5-phospho-alpha-D-ribose 1-diphosphate</name>
        <dbReference type="ChEBI" id="CHEBI:58017"/>
    </ligand>
</feature>
<feature type="binding site" evidence="1">
    <location>
        <position position="170"/>
    </location>
    <ligand>
        <name>anthranilate</name>
        <dbReference type="ChEBI" id="CHEBI:16567"/>
        <label>2</label>
    </ligand>
</feature>
<feature type="binding site" evidence="1">
    <location>
        <position position="229"/>
    </location>
    <ligand>
        <name>Mg(2+)</name>
        <dbReference type="ChEBI" id="CHEBI:18420"/>
        <label>2</label>
    </ligand>
</feature>
<feature type="binding site" evidence="1">
    <location>
        <position position="230"/>
    </location>
    <ligand>
        <name>Mg(2+)</name>
        <dbReference type="ChEBI" id="CHEBI:18420"/>
        <label>1</label>
    </ligand>
</feature>
<feature type="binding site" evidence="1">
    <location>
        <position position="230"/>
    </location>
    <ligand>
        <name>Mg(2+)</name>
        <dbReference type="ChEBI" id="CHEBI:18420"/>
        <label>2</label>
    </ligand>
</feature>
<gene>
    <name evidence="1" type="primary">trpD</name>
    <name type="ordered locus">XF_0212</name>
</gene>
<dbReference type="EC" id="2.4.2.18" evidence="1"/>
<dbReference type="EMBL" id="AE003849">
    <property type="protein sequence ID" value="AAF83025.1"/>
    <property type="molecule type" value="Genomic_DNA"/>
</dbReference>
<dbReference type="PIR" id="C82835">
    <property type="entry name" value="C82835"/>
</dbReference>
<dbReference type="RefSeq" id="WP_010892753.1">
    <property type="nucleotide sequence ID" value="NC_002488.3"/>
</dbReference>
<dbReference type="SMR" id="Q9PGT6"/>
<dbReference type="STRING" id="160492.XF_0212"/>
<dbReference type="KEGG" id="xfa:XF_0212"/>
<dbReference type="PATRIC" id="fig|160492.11.peg.224"/>
<dbReference type="eggNOG" id="COG0547">
    <property type="taxonomic scope" value="Bacteria"/>
</dbReference>
<dbReference type="HOGENOM" id="CLU_034315_2_1_6"/>
<dbReference type="UniPathway" id="UPA00035">
    <property type="reaction ID" value="UER00041"/>
</dbReference>
<dbReference type="Proteomes" id="UP000000812">
    <property type="component" value="Chromosome"/>
</dbReference>
<dbReference type="GO" id="GO:0005829">
    <property type="term" value="C:cytosol"/>
    <property type="evidence" value="ECO:0007669"/>
    <property type="project" value="TreeGrafter"/>
</dbReference>
<dbReference type="GO" id="GO:0004048">
    <property type="term" value="F:anthranilate phosphoribosyltransferase activity"/>
    <property type="evidence" value="ECO:0007669"/>
    <property type="project" value="UniProtKB-UniRule"/>
</dbReference>
<dbReference type="GO" id="GO:0000287">
    <property type="term" value="F:magnesium ion binding"/>
    <property type="evidence" value="ECO:0007669"/>
    <property type="project" value="UniProtKB-UniRule"/>
</dbReference>
<dbReference type="GO" id="GO:0000162">
    <property type="term" value="P:L-tryptophan biosynthetic process"/>
    <property type="evidence" value="ECO:0007669"/>
    <property type="project" value="UniProtKB-UniRule"/>
</dbReference>
<dbReference type="FunFam" id="3.40.1030.10:FF:000002">
    <property type="entry name" value="Anthranilate phosphoribosyltransferase"/>
    <property type="match status" value="1"/>
</dbReference>
<dbReference type="Gene3D" id="3.40.1030.10">
    <property type="entry name" value="Nucleoside phosphorylase/phosphoribosyltransferase catalytic domain"/>
    <property type="match status" value="1"/>
</dbReference>
<dbReference type="Gene3D" id="1.20.970.10">
    <property type="entry name" value="Transferase, Pyrimidine Nucleoside Phosphorylase, Chain C"/>
    <property type="match status" value="1"/>
</dbReference>
<dbReference type="HAMAP" id="MF_00211">
    <property type="entry name" value="TrpD"/>
    <property type="match status" value="1"/>
</dbReference>
<dbReference type="InterPro" id="IPR005940">
    <property type="entry name" value="Anthranilate_Pribosyl_Tfrase"/>
</dbReference>
<dbReference type="InterPro" id="IPR000312">
    <property type="entry name" value="Glycosyl_Trfase_fam3"/>
</dbReference>
<dbReference type="InterPro" id="IPR017459">
    <property type="entry name" value="Glycosyl_Trfase_fam3_N_dom"/>
</dbReference>
<dbReference type="InterPro" id="IPR036320">
    <property type="entry name" value="Glycosyl_Trfase_fam3_N_dom_sf"/>
</dbReference>
<dbReference type="InterPro" id="IPR035902">
    <property type="entry name" value="Nuc_phospho_transferase"/>
</dbReference>
<dbReference type="NCBIfam" id="TIGR01245">
    <property type="entry name" value="trpD"/>
    <property type="match status" value="1"/>
</dbReference>
<dbReference type="PANTHER" id="PTHR43285">
    <property type="entry name" value="ANTHRANILATE PHOSPHORIBOSYLTRANSFERASE"/>
    <property type="match status" value="1"/>
</dbReference>
<dbReference type="PANTHER" id="PTHR43285:SF2">
    <property type="entry name" value="ANTHRANILATE PHOSPHORIBOSYLTRANSFERASE"/>
    <property type="match status" value="1"/>
</dbReference>
<dbReference type="Pfam" id="PF02885">
    <property type="entry name" value="Glycos_trans_3N"/>
    <property type="match status" value="1"/>
</dbReference>
<dbReference type="Pfam" id="PF00591">
    <property type="entry name" value="Glycos_transf_3"/>
    <property type="match status" value="1"/>
</dbReference>
<dbReference type="SUPFAM" id="SSF52418">
    <property type="entry name" value="Nucleoside phosphorylase/phosphoribosyltransferase catalytic domain"/>
    <property type="match status" value="1"/>
</dbReference>
<dbReference type="SUPFAM" id="SSF47648">
    <property type="entry name" value="Nucleoside phosphorylase/phosphoribosyltransferase N-terminal domain"/>
    <property type="match status" value="1"/>
</dbReference>
<organism>
    <name type="scientific">Xylella fastidiosa (strain 9a5c)</name>
    <dbReference type="NCBI Taxonomy" id="160492"/>
    <lineage>
        <taxon>Bacteria</taxon>
        <taxon>Pseudomonadati</taxon>
        <taxon>Pseudomonadota</taxon>
        <taxon>Gammaproteobacteria</taxon>
        <taxon>Lysobacterales</taxon>
        <taxon>Lysobacteraceae</taxon>
        <taxon>Xylella</taxon>
    </lineage>
</organism>
<reference key="1">
    <citation type="journal article" date="2000" name="Nature">
        <title>The genome sequence of the plant pathogen Xylella fastidiosa.</title>
        <authorList>
            <person name="Simpson A.J.G."/>
            <person name="Reinach F.C."/>
            <person name="Arruda P."/>
            <person name="Abreu F.A."/>
            <person name="Acencio M."/>
            <person name="Alvarenga R."/>
            <person name="Alves L.M.C."/>
            <person name="Araya J.E."/>
            <person name="Baia G.S."/>
            <person name="Baptista C.S."/>
            <person name="Barros M.H."/>
            <person name="Bonaccorsi E.D."/>
            <person name="Bordin S."/>
            <person name="Bove J.M."/>
            <person name="Briones M.R.S."/>
            <person name="Bueno M.R.P."/>
            <person name="Camargo A.A."/>
            <person name="Camargo L.E.A."/>
            <person name="Carraro D.M."/>
            <person name="Carrer H."/>
            <person name="Colauto N.B."/>
            <person name="Colombo C."/>
            <person name="Costa F.F."/>
            <person name="Costa M.C.R."/>
            <person name="Costa-Neto C.M."/>
            <person name="Coutinho L.L."/>
            <person name="Cristofani M."/>
            <person name="Dias-Neto E."/>
            <person name="Docena C."/>
            <person name="El-Dorry H."/>
            <person name="Facincani A.P."/>
            <person name="Ferreira A.J.S."/>
            <person name="Ferreira V.C.A."/>
            <person name="Ferro J.A."/>
            <person name="Fraga J.S."/>
            <person name="Franca S.C."/>
            <person name="Franco M.C."/>
            <person name="Frohme M."/>
            <person name="Furlan L.R."/>
            <person name="Garnier M."/>
            <person name="Goldman G.H."/>
            <person name="Goldman M.H.S."/>
            <person name="Gomes S.L."/>
            <person name="Gruber A."/>
            <person name="Ho P.L."/>
            <person name="Hoheisel J.D."/>
            <person name="Junqueira M.L."/>
            <person name="Kemper E.L."/>
            <person name="Kitajima J.P."/>
            <person name="Krieger J.E."/>
            <person name="Kuramae E.E."/>
            <person name="Laigret F."/>
            <person name="Lambais M.R."/>
            <person name="Leite L.C.C."/>
            <person name="Lemos E.G.M."/>
            <person name="Lemos M.V.F."/>
            <person name="Lopes S.A."/>
            <person name="Lopes C.R."/>
            <person name="Machado J.A."/>
            <person name="Machado M.A."/>
            <person name="Madeira A.M.B.N."/>
            <person name="Madeira H.M.F."/>
            <person name="Marino C.L."/>
            <person name="Marques M.V."/>
            <person name="Martins E.A.L."/>
            <person name="Martins E.M.F."/>
            <person name="Matsukuma A.Y."/>
            <person name="Menck C.F.M."/>
            <person name="Miracca E.C."/>
            <person name="Miyaki C.Y."/>
            <person name="Monteiro-Vitorello C.B."/>
            <person name="Moon D.H."/>
            <person name="Nagai M.A."/>
            <person name="Nascimento A.L.T.O."/>
            <person name="Netto L.E.S."/>
            <person name="Nhani A. Jr."/>
            <person name="Nobrega F.G."/>
            <person name="Nunes L.R."/>
            <person name="Oliveira M.A."/>
            <person name="de Oliveira M.C."/>
            <person name="de Oliveira R.C."/>
            <person name="Palmieri D.A."/>
            <person name="Paris A."/>
            <person name="Peixoto B.R."/>
            <person name="Pereira G.A.G."/>
            <person name="Pereira H.A. Jr."/>
            <person name="Pesquero J.B."/>
            <person name="Quaggio R.B."/>
            <person name="Roberto P.G."/>
            <person name="Rodrigues V."/>
            <person name="de Rosa A.J.M."/>
            <person name="de Rosa V.E. Jr."/>
            <person name="de Sa R.G."/>
            <person name="Santelli R.V."/>
            <person name="Sawasaki H.E."/>
            <person name="da Silva A.C.R."/>
            <person name="da Silva A.M."/>
            <person name="da Silva F.R."/>
            <person name="Silva W.A. Jr."/>
            <person name="da Silveira J.F."/>
            <person name="Silvestri M.L.Z."/>
            <person name="Siqueira W.J."/>
            <person name="de Souza A.A."/>
            <person name="de Souza A.P."/>
            <person name="Terenzi M.F."/>
            <person name="Truffi D."/>
            <person name="Tsai S.M."/>
            <person name="Tsuhako M.H."/>
            <person name="Vallada H."/>
            <person name="Van Sluys M.A."/>
            <person name="Verjovski-Almeida S."/>
            <person name="Vettore A.L."/>
            <person name="Zago M.A."/>
            <person name="Zatz M."/>
            <person name="Meidanis J."/>
            <person name="Setubal J.C."/>
        </authorList>
    </citation>
    <scope>NUCLEOTIDE SEQUENCE [LARGE SCALE GENOMIC DNA]</scope>
    <source>
        <strain>9a5c</strain>
    </source>
</reference>
<keyword id="KW-0028">Amino-acid biosynthesis</keyword>
<keyword id="KW-0057">Aromatic amino acid biosynthesis</keyword>
<keyword id="KW-0328">Glycosyltransferase</keyword>
<keyword id="KW-0460">Magnesium</keyword>
<keyword id="KW-0479">Metal-binding</keyword>
<keyword id="KW-0808">Transferase</keyword>
<keyword id="KW-0822">Tryptophan biosynthesis</keyword>
<protein>
    <recommendedName>
        <fullName evidence="1">Anthranilate phosphoribosyltransferase</fullName>
        <ecNumber evidence="1">2.4.2.18</ecNumber>
    </recommendedName>
</protein>
<evidence type="ECO:0000255" key="1">
    <source>
        <dbReference type="HAMAP-Rule" id="MF_00211"/>
    </source>
</evidence>
<proteinExistence type="inferred from homology"/>
<comment type="function">
    <text evidence="1">Catalyzes the transfer of the phosphoribosyl group of 5-phosphorylribose-1-pyrophosphate (PRPP) to anthranilate to yield N-(5'-phosphoribosyl)-anthranilate (PRA).</text>
</comment>
<comment type="catalytic activity">
    <reaction evidence="1">
        <text>N-(5-phospho-beta-D-ribosyl)anthranilate + diphosphate = 5-phospho-alpha-D-ribose 1-diphosphate + anthranilate</text>
        <dbReference type="Rhea" id="RHEA:11768"/>
        <dbReference type="ChEBI" id="CHEBI:16567"/>
        <dbReference type="ChEBI" id="CHEBI:18277"/>
        <dbReference type="ChEBI" id="CHEBI:33019"/>
        <dbReference type="ChEBI" id="CHEBI:58017"/>
        <dbReference type="EC" id="2.4.2.18"/>
    </reaction>
</comment>
<comment type="cofactor">
    <cofactor evidence="1">
        <name>Mg(2+)</name>
        <dbReference type="ChEBI" id="CHEBI:18420"/>
    </cofactor>
    <text evidence="1">Binds 2 magnesium ions per monomer.</text>
</comment>
<comment type="pathway">
    <text evidence="1">Amino-acid biosynthesis; L-tryptophan biosynthesis; L-tryptophan from chorismate: step 2/5.</text>
</comment>
<comment type="subunit">
    <text evidence="1">Homodimer.</text>
</comment>
<comment type="similarity">
    <text evidence="1">Belongs to the anthranilate phosphoribosyltransferase family.</text>
</comment>
<name>TRPD_XYLFA</name>
<accession>Q9PGT6</accession>
<sequence length="344" mass="36738">MSMTPQKALQCIIEHREILQDEMVQLMRQIMNAEVSGIMVAAILAGLRVKKETVGEIAGAATVMREFSRKVNVQDRTHLVDIVGTGGDGWHTFNISTCAMFVAAAAGAKVAKHGNRSVSSKSGSADVLEALGASIELQPLEVAEVIGCIGVGFMFAPIHHPVMQVVSPVRREMGVRTIFNILGPLTNPADAPNILMGVFDPDLVGIQAHVLHKLGAERALVVCGRDGMDELSLGTTTLVGELRGGRVREYEVSPEDYGMAVSPISNLQVESPAESREMLLDVLAGQPGPALDVVALNAGAALYVAGVAQDIGHGVALAREVLFDGRARDILDRYVAFTRRPRYV</sequence>